<proteinExistence type="inferred from homology"/>
<evidence type="ECO:0000255" key="1">
    <source>
        <dbReference type="HAMAP-Rule" id="MF_00144"/>
    </source>
</evidence>
<keyword id="KW-0067">ATP-binding</keyword>
<keyword id="KW-0963">Cytoplasm</keyword>
<keyword id="KW-1015">Disulfide bond</keyword>
<keyword id="KW-0547">Nucleotide-binding</keyword>
<keyword id="KW-0694">RNA-binding</keyword>
<keyword id="KW-0808">Transferase</keyword>
<keyword id="KW-0819">tRNA processing</keyword>
<keyword id="KW-0820">tRNA-binding</keyword>
<accession>B1LI10</accession>
<name>MNMA_ECOSM</name>
<comment type="function">
    <text evidence="1">Catalyzes the 2-thiolation of uridine at the wobble position (U34) of tRNA(Lys), tRNA(Glu) and tRNA(Gln), leading to the formation of s(2)U34, the first step of tRNA-mnm(5)s(2)U34 synthesis. Sulfur is provided by IscS, via a sulfur-relay system. Binds ATP and its substrate tRNAs.</text>
</comment>
<comment type="catalytic activity">
    <reaction evidence="1">
        <text>S-sulfanyl-L-cysteinyl-[protein] + uridine(34) in tRNA + AH2 + ATP = 2-thiouridine(34) in tRNA + L-cysteinyl-[protein] + A + AMP + diphosphate + H(+)</text>
        <dbReference type="Rhea" id="RHEA:47032"/>
        <dbReference type="Rhea" id="RHEA-COMP:10131"/>
        <dbReference type="Rhea" id="RHEA-COMP:11726"/>
        <dbReference type="Rhea" id="RHEA-COMP:11727"/>
        <dbReference type="Rhea" id="RHEA-COMP:11728"/>
        <dbReference type="ChEBI" id="CHEBI:13193"/>
        <dbReference type="ChEBI" id="CHEBI:15378"/>
        <dbReference type="ChEBI" id="CHEBI:17499"/>
        <dbReference type="ChEBI" id="CHEBI:29950"/>
        <dbReference type="ChEBI" id="CHEBI:30616"/>
        <dbReference type="ChEBI" id="CHEBI:33019"/>
        <dbReference type="ChEBI" id="CHEBI:61963"/>
        <dbReference type="ChEBI" id="CHEBI:65315"/>
        <dbReference type="ChEBI" id="CHEBI:87170"/>
        <dbReference type="ChEBI" id="CHEBI:456215"/>
        <dbReference type="EC" id="2.8.1.13"/>
    </reaction>
</comment>
<comment type="subunit">
    <text evidence="1">Interacts with TusE.</text>
</comment>
<comment type="subcellular location">
    <subcellularLocation>
        <location evidence="1">Cytoplasm</location>
    </subcellularLocation>
</comment>
<comment type="similarity">
    <text evidence="1">Belongs to the MnmA/TRMU family.</text>
</comment>
<sequence length="368" mass="40973">MSETAKKVIVGMSGGVDSSVSAWLLQQQGYQVEGLFMKNWEEDDGEEYCTAAADLADAQAVCDKLGIELHTVNFAAEYWDNVFELFLAEYKAGRTPNPDILCNKEIKFKAFLEFAAEDLGADYIATGHYVRRADVDGKSRLLRGLDSNKDQSYFLYTLSHEQIAQSLFPVGELEKPQVRKIAEDLGLVTAKKKDSTGICFIGERKFREFLGRYLPAQPGKIITVDGDEIGEHQGLMYHTLGQRKGLGIGGTKEGTEEPWYVVDKDVENNILIVAQGHEHPRLMSVGLIAQQLHWVDREPFTGTMRCTVKTRYRQTDIPCTVKALDDDRIEVIFDEPVAAVTPGQSAVFYNGEVCLGGGIIEQRLPLPV</sequence>
<reference key="1">
    <citation type="journal article" date="2008" name="J. Bacteriol.">
        <title>Insights into the environmental resistance gene pool from the genome sequence of the multidrug-resistant environmental isolate Escherichia coli SMS-3-5.</title>
        <authorList>
            <person name="Fricke W.F."/>
            <person name="Wright M.S."/>
            <person name="Lindell A.H."/>
            <person name="Harkins D.M."/>
            <person name="Baker-Austin C."/>
            <person name="Ravel J."/>
            <person name="Stepanauskas R."/>
        </authorList>
    </citation>
    <scope>NUCLEOTIDE SEQUENCE [LARGE SCALE GENOMIC DNA]</scope>
    <source>
        <strain>SMS-3-5 / SECEC</strain>
    </source>
</reference>
<organism>
    <name type="scientific">Escherichia coli (strain SMS-3-5 / SECEC)</name>
    <dbReference type="NCBI Taxonomy" id="439855"/>
    <lineage>
        <taxon>Bacteria</taxon>
        <taxon>Pseudomonadati</taxon>
        <taxon>Pseudomonadota</taxon>
        <taxon>Gammaproteobacteria</taxon>
        <taxon>Enterobacterales</taxon>
        <taxon>Enterobacteriaceae</taxon>
        <taxon>Escherichia</taxon>
    </lineage>
</organism>
<gene>
    <name evidence="1" type="primary">mnmA</name>
    <name type="ordered locus">EcSMS35_1992</name>
</gene>
<dbReference type="EC" id="2.8.1.13" evidence="1"/>
<dbReference type="EMBL" id="CP000970">
    <property type="protein sequence ID" value="ACB18422.1"/>
    <property type="molecule type" value="Genomic_DNA"/>
</dbReference>
<dbReference type="RefSeq" id="WP_001353282.1">
    <property type="nucleotide sequence ID" value="NC_010498.1"/>
</dbReference>
<dbReference type="SMR" id="B1LI10"/>
<dbReference type="GeneID" id="89516005"/>
<dbReference type="KEGG" id="ecm:EcSMS35_1992"/>
<dbReference type="HOGENOM" id="CLU_035188_1_0_6"/>
<dbReference type="Proteomes" id="UP000007011">
    <property type="component" value="Chromosome"/>
</dbReference>
<dbReference type="GO" id="GO:0005737">
    <property type="term" value="C:cytoplasm"/>
    <property type="evidence" value="ECO:0007669"/>
    <property type="project" value="UniProtKB-SubCell"/>
</dbReference>
<dbReference type="GO" id="GO:0005524">
    <property type="term" value="F:ATP binding"/>
    <property type="evidence" value="ECO:0007669"/>
    <property type="project" value="UniProtKB-KW"/>
</dbReference>
<dbReference type="GO" id="GO:0000049">
    <property type="term" value="F:tRNA binding"/>
    <property type="evidence" value="ECO:0007669"/>
    <property type="project" value="UniProtKB-KW"/>
</dbReference>
<dbReference type="GO" id="GO:0103016">
    <property type="term" value="F:tRNA-uridine 2-sulfurtransferase activity"/>
    <property type="evidence" value="ECO:0007669"/>
    <property type="project" value="UniProtKB-EC"/>
</dbReference>
<dbReference type="GO" id="GO:0002143">
    <property type="term" value="P:tRNA wobble position uridine thiolation"/>
    <property type="evidence" value="ECO:0007669"/>
    <property type="project" value="TreeGrafter"/>
</dbReference>
<dbReference type="CDD" id="cd01998">
    <property type="entry name" value="MnmA_TRMU-like"/>
    <property type="match status" value="1"/>
</dbReference>
<dbReference type="FunFam" id="2.30.30.280:FF:000001">
    <property type="entry name" value="tRNA-specific 2-thiouridylase MnmA"/>
    <property type="match status" value="1"/>
</dbReference>
<dbReference type="FunFam" id="2.40.30.10:FF:000023">
    <property type="entry name" value="tRNA-specific 2-thiouridylase MnmA"/>
    <property type="match status" value="1"/>
</dbReference>
<dbReference type="FunFam" id="3.40.50.620:FF:000004">
    <property type="entry name" value="tRNA-specific 2-thiouridylase MnmA"/>
    <property type="match status" value="1"/>
</dbReference>
<dbReference type="Gene3D" id="2.30.30.280">
    <property type="entry name" value="Adenine nucleotide alpha hydrolases-like domains"/>
    <property type="match status" value="1"/>
</dbReference>
<dbReference type="Gene3D" id="3.40.50.620">
    <property type="entry name" value="HUPs"/>
    <property type="match status" value="1"/>
</dbReference>
<dbReference type="Gene3D" id="2.40.30.10">
    <property type="entry name" value="Translation factors"/>
    <property type="match status" value="1"/>
</dbReference>
<dbReference type="HAMAP" id="MF_00144">
    <property type="entry name" value="tRNA_thiouridyl_MnmA"/>
    <property type="match status" value="1"/>
</dbReference>
<dbReference type="InterPro" id="IPR004506">
    <property type="entry name" value="MnmA-like"/>
</dbReference>
<dbReference type="InterPro" id="IPR046885">
    <property type="entry name" value="MnmA-like_C"/>
</dbReference>
<dbReference type="InterPro" id="IPR046884">
    <property type="entry name" value="MnmA-like_central"/>
</dbReference>
<dbReference type="InterPro" id="IPR023382">
    <property type="entry name" value="MnmA-like_central_sf"/>
</dbReference>
<dbReference type="InterPro" id="IPR014729">
    <property type="entry name" value="Rossmann-like_a/b/a_fold"/>
</dbReference>
<dbReference type="NCBIfam" id="NF001138">
    <property type="entry name" value="PRK00143.1"/>
    <property type="match status" value="1"/>
</dbReference>
<dbReference type="NCBIfam" id="TIGR00420">
    <property type="entry name" value="trmU"/>
    <property type="match status" value="1"/>
</dbReference>
<dbReference type="PANTHER" id="PTHR11933:SF5">
    <property type="entry name" value="MITOCHONDRIAL TRNA-SPECIFIC 2-THIOURIDYLASE 1"/>
    <property type="match status" value="1"/>
</dbReference>
<dbReference type="PANTHER" id="PTHR11933">
    <property type="entry name" value="TRNA 5-METHYLAMINOMETHYL-2-THIOURIDYLATE -METHYLTRANSFERASE"/>
    <property type="match status" value="1"/>
</dbReference>
<dbReference type="Pfam" id="PF03054">
    <property type="entry name" value="tRNA_Me_trans"/>
    <property type="match status" value="1"/>
</dbReference>
<dbReference type="Pfam" id="PF20258">
    <property type="entry name" value="tRNA_Me_trans_C"/>
    <property type="match status" value="1"/>
</dbReference>
<dbReference type="Pfam" id="PF20259">
    <property type="entry name" value="tRNA_Me_trans_M"/>
    <property type="match status" value="1"/>
</dbReference>
<dbReference type="SUPFAM" id="SSF52402">
    <property type="entry name" value="Adenine nucleotide alpha hydrolases-like"/>
    <property type="match status" value="1"/>
</dbReference>
<feature type="chain" id="PRO_0000349628" description="tRNA-specific 2-thiouridylase MnmA">
    <location>
        <begin position="1"/>
        <end position="368"/>
    </location>
</feature>
<feature type="region of interest" description="Interaction with target base in tRNA" evidence="1">
    <location>
        <begin position="97"/>
        <end position="99"/>
    </location>
</feature>
<feature type="region of interest" description="Interaction with tRNA" evidence="1">
    <location>
        <begin position="149"/>
        <end position="151"/>
    </location>
</feature>
<feature type="region of interest" description="Interaction with tRNA" evidence="1">
    <location>
        <begin position="311"/>
        <end position="312"/>
    </location>
</feature>
<feature type="active site" description="Nucleophile" evidence="1">
    <location>
        <position position="102"/>
    </location>
</feature>
<feature type="active site" description="Cysteine persulfide intermediate" evidence="1">
    <location>
        <position position="199"/>
    </location>
</feature>
<feature type="binding site" evidence="1">
    <location>
        <begin position="11"/>
        <end position="18"/>
    </location>
    <ligand>
        <name>ATP</name>
        <dbReference type="ChEBI" id="CHEBI:30616"/>
    </ligand>
</feature>
<feature type="binding site" evidence="1">
    <location>
        <position position="37"/>
    </location>
    <ligand>
        <name>ATP</name>
        <dbReference type="ChEBI" id="CHEBI:30616"/>
    </ligand>
</feature>
<feature type="binding site" evidence="1">
    <location>
        <position position="127"/>
    </location>
    <ligand>
        <name>ATP</name>
        <dbReference type="ChEBI" id="CHEBI:30616"/>
    </ligand>
</feature>
<feature type="site" description="Interaction with tRNA" evidence="1">
    <location>
        <position position="128"/>
    </location>
</feature>
<feature type="site" description="Interaction with tRNA" evidence="1">
    <location>
        <position position="344"/>
    </location>
</feature>
<feature type="disulfide bond" description="Alternate" evidence="1">
    <location>
        <begin position="102"/>
        <end position="199"/>
    </location>
</feature>
<protein>
    <recommendedName>
        <fullName evidence="1">tRNA-specific 2-thiouridylase MnmA</fullName>
        <ecNumber evidence="1">2.8.1.13</ecNumber>
    </recommendedName>
</protein>